<accession>Q499P8</accession>
<reference key="1">
    <citation type="journal article" date="2004" name="Genome Res.">
        <title>The status, quality, and expansion of the NIH full-length cDNA project: the Mammalian Gene Collection (MGC).</title>
        <authorList>
            <consortium name="The MGC Project Team"/>
        </authorList>
    </citation>
    <scope>NUCLEOTIDE SEQUENCE [LARGE SCALE MRNA]</scope>
    <source>
        <tissue>Prostate</tissue>
    </source>
</reference>
<evidence type="ECO:0000250" key="1">
    <source>
        <dbReference type="UniProtKB" id="Q96GQ5"/>
    </source>
</evidence>
<evidence type="ECO:0000255" key="2"/>
<evidence type="ECO:0000305" key="3"/>
<protein>
    <recommendedName>
        <fullName evidence="3">RUS family member 1</fullName>
    </recommendedName>
</protein>
<name>RUSF1_RAT</name>
<proteinExistence type="evidence at transcript level"/>
<feature type="initiator methionine" description="Removed" evidence="1">
    <location>
        <position position="1"/>
    </location>
</feature>
<feature type="chain" id="PRO_0000282933" description="RUS family member 1">
    <location>
        <begin position="2"/>
        <end position="466"/>
    </location>
</feature>
<feature type="transmembrane region" description="Helical" evidence="2">
    <location>
        <begin position="245"/>
        <end position="265"/>
    </location>
</feature>
<feature type="modified residue" description="N-acetylalanine" evidence="1">
    <location>
        <position position="2"/>
    </location>
</feature>
<dbReference type="EMBL" id="BC099813">
    <property type="protein sequence ID" value="AAH99813.1"/>
    <property type="molecule type" value="mRNA"/>
</dbReference>
<dbReference type="RefSeq" id="NP_001030594.1">
    <property type="nucleotide sequence ID" value="NM_001035517.1"/>
</dbReference>
<dbReference type="FunCoup" id="Q499P8">
    <property type="interactions" value="1060"/>
</dbReference>
<dbReference type="PhosphoSitePlus" id="Q499P8"/>
<dbReference type="PaxDb" id="10116-ENSRNOP00000027290"/>
<dbReference type="GeneID" id="361654"/>
<dbReference type="KEGG" id="rno:361654"/>
<dbReference type="UCSC" id="RGD:1310127">
    <property type="organism name" value="rat"/>
</dbReference>
<dbReference type="AGR" id="RGD:1310127"/>
<dbReference type="CTD" id="64755"/>
<dbReference type="RGD" id="1310127">
    <property type="gene designation" value="Rusf1"/>
</dbReference>
<dbReference type="eggNOG" id="KOG4249">
    <property type="taxonomic scope" value="Eukaryota"/>
</dbReference>
<dbReference type="InParanoid" id="Q499P8"/>
<dbReference type="OrthoDB" id="364779at2759"/>
<dbReference type="PhylomeDB" id="Q499P8"/>
<dbReference type="PRO" id="PR:Q499P8"/>
<dbReference type="Proteomes" id="UP000002494">
    <property type="component" value="Unplaced"/>
</dbReference>
<dbReference type="GO" id="GO:0016020">
    <property type="term" value="C:membrane"/>
    <property type="evidence" value="ECO:0007669"/>
    <property type="project" value="UniProtKB-SubCell"/>
</dbReference>
<dbReference type="InterPro" id="IPR006968">
    <property type="entry name" value="RUS_fam"/>
</dbReference>
<dbReference type="InterPro" id="IPR055412">
    <property type="entry name" value="UVB_sens_C"/>
</dbReference>
<dbReference type="InterPro" id="IPR054549">
    <property type="entry name" value="UVB_sens_RUS_dom"/>
</dbReference>
<dbReference type="PANTHER" id="PTHR12770:SF31">
    <property type="entry name" value="RUS FAMILY MEMBER 1"/>
    <property type="match status" value="1"/>
</dbReference>
<dbReference type="PANTHER" id="PTHR12770">
    <property type="entry name" value="RUS1 FAMILY PROTEIN C16ORF58"/>
    <property type="match status" value="1"/>
</dbReference>
<dbReference type="Pfam" id="PF24160">
    <property type="entry name" value="UVB_sens_C"/>
    <property type="match status" value="1"/>
</dbReference>
<dbReference type="Pfam" id="PF04884">
    <property type="entry name" value="UVB_sens_prot"/>
    <property type="match status" value="1"/>
</dbReference>
<sequence length="466" mass="50779">MADTASLRAPLCTEQFGSGAPRSCSAAADGSLQWDRAQRWGWFSRASITKPGQHEGGGRGPWAALTTLSGLRSVLLPQGFPDSVSPDYLQYQLWDSVQAFASSLSGSLATQAVLQGLGVGNAKASVSAATSTWLVKDSTGMLGRIIFAWWKGSKLDCNAKQWRLFADILNDTAMFLEIMAPMYPIFFTMTVSTSNLAKCIVGVAGGATRAALTMHQARRNNMADVSAKDSSQETVVNLAGLLVSLLMLPLVSDCLSLSLGCFILLTALHIYANYRAVRALVLETLNESRLQLVLKHFLQRGEVLEPASANQMEPLWTGFWPSLSLSLGVPLHHLVSSVSELKQLVEGHQEPYLLCWNQSQNQVQVALSQVAGPETVLRAATHGLILGALQEDGPLPGELAELRDMVQAGPKNESWILVRETHQVLDTLFPKFLKGLQAAGWKTEKHHLEVDEWRATWPLSPEKKVL</sequence>
<gene>
    <name type="primary">Rusf1</name>
</gene>
<keyword id="KW-0007">Acetylation</keyword>
<keyword id="KW-0472">Membrane</keyword>
<keyword id="KW-1185">Reference proteome</keyword>
<keyword id="KW-0812">Transmembrane</keyword>
<keyword id="KW-1133">Transmembrane helix</keyword>
<organism>
    <name type="scientific">Rattus norvegicus</name>
    <name type="common">Rat</name>
    <dbReference type="NCBI Taxonomy" id="10116"/>
    <lineage>
        <taxon>Eukaryota</taxon>
        <taxon>Metazoa</taxon>
        <taxon>Chordata</taxon>
        <taxon>Craniata</taxon>
        <taxon>Vertebrata</taxon>
        <taxon>Euteleostomi</taxon>
        <taxon>Mammalia</taxon>
        <taxon>Eutheria</taxon>
        <taxon>Euarchontoglires</taxon>
        <taxon>Glires</taxon>
        <taxon>Rodentia</taxon>
        <taxon>Myomorpha</taxon>
        <taxon>Muroidea</taxon>
        <taxon>Muridae</taxon>
        <taxon>Murinae</taxon>
        <taxon>Rattus</taxon>
    </lineage>
</organism>
<comment type="subcellular location">
    <subcellularLocation>
        <location evidence="3">Membrane</location>
        <topology evidence="3">Single-pass membrane protein</topology>
    </subcellularLocation>
</comment>
<comment type="similarity">
    <text evidence="3">Belongs to the RUS1 family.</text>
</comment>